<protein>
    <recommendedName>
        <fullName evidence="1">5'-deoxynucleotidase YfbR</fullName>
        <ecNumber evidence="1">3.1.3.89</ecNumber>
    </recommendedName>
    <alternativeName>
        <fullName evidence="1">5'-deoxyribonucleotidase</fullName>
    </alternativeName>
    <alternativeName>
        <fullName evidence="1">Nucleoside 5'-monophosphate phosphohydrolase</fullName>
    </alternativeName>
</protein>
<dbReference type="EC" id="3.1.3.89" evidence="1"/>
<dbReference type="EMBL" id="AE005674">
    <property type="protein sequence ID" value="AAN43880.1"/>
    <property type="molecule type" value="Genomic_DNA"/>
</dbReference>
<dbReference type="EMBL" id="AE014073">
    <property type="protein sequence ID" value="AAP17698.1"/>
    <property type="molecule type" value="Genomic_DNA"/>
</dbReference>
<dbReference type="RefSeq" id="NP_708173.1">
    <property type="nucleotide sequence ID" value="NC_004337.2"/>
</dbReference>
<dbReference type="RefSeq" id="WP_000813851.1">
    <property type="nucleotide sequence ID" value="NZ_WPGW01000016.1"/>
</dbReference>
<dbReference type="SMR" id="Q83QS4"/>
<dbReference type="STRING" id="198214.SF2367"/>
<dbReference type="PaxDb" id="198214-SF2367"/>
<dbReference type="GeneID" id="1025547"/>
<dbReference type="KEGG" id="sfl:SF2367"/>
<dbReference type="KEGG" id="sfx:S2502"/>
<dbReference type="PATRIC" id="fig|198214.7.peg.2833"/>
<dbReference type="HOGENOM" id="CLU_084784_0_0_6"/>
<dbReference type="Proteomes" id="UP000001006">
    <property type="component" value="Chromosome"/>
</dbReference>
<dbReference type="Proteomes" id="UP000002673">
    <property type="component" value="Chromosome"/>
</dbReference>
<dbReference type="GO" id="GO:0005737">
    <property type="term" value="C:cytoplasm"/>
    <property type="evidence" value="ECO:0007669"/>
    <property type="project" value="UniProtKB-SubCell"/>
</dbReference>
<dbReference type="GO" id="GO:0002953">
    <property type="term" value="F:5'-deoxynucleotidase activity"/>
    <property type="evidence" value="ECO:0007669"/>
    <property type="project" value="UniProtKB-EC"/>
</dbReference>
<dbReference type="GO" id="GO:0046872">
    <property type="term" value="F:metal ion binding"/>
    <property type="evidence" value="ECO:0007669"/>
    <property type="project" value="UniProtKB-KW"/>
</dbReference>
<dbReference type="GO" id="GO:0000166">
    <property type="term" value="F:nucleotide binding"/>
    <property type="evidence" value="ECO:0007669"/>
    <property type="project" value="UniProtKB-KW"/>
</dbReference>
<dbReference type="CDD" id="cd00077">
    <property type="entry name" value="HDc"/>
    <property type="match status" value="1"/>
</dbReference>
<dbReference type="FunFam" id="1.10.3210.10:FF:000002">
    <property type="entry name" value="Nucleotidase YfbR"/>
    <property type="match status" value="1"/>
</dbReference>
<dbReference type="Gene3D" id="1.10.3210.10">
    <property type="entry name" value="Hypothetical protein af1432"/>
    <property type="match status" value="1"/>
</dbReference>
<dbReference type="HAMAP" id="MF_01100">
    <property type="entry name" value="5DNU"/>
    <property type="match status" value="1"/>
</dbReference>
<dbReference type="InterPro" id="IPR003607">
    <property type="entry name" value="HD/PDEase_dom"/>
</dbReference>
<dbReference type="InterPro" id="IPR006674">
    <property type="entry name" value="HD_domain"/>
</dbReference>
<dbReference type="InterPro" id="IPR022971">
    <property type="entry name" value="YfbR"/>
</dbReference>
<dbReference type="InterPro" id="IPR039356">
    <property type="entry name" value="YfbR/HDDC2"/>
</dbReference>
<dbReference type="NCBIfam" id="NF003009">
    <property type="entry name" value="PRK03826.1"/>
    <property type="match status" value="1"/>
</dbReference>
<dbReference type="PANTHER" id="PTHR11845">
    <property type="entry name" value="5'-DEOXYNUCLEOTIDASE HDDC2"/>
    <property type="match status" value="1"/>
</dbReference>
<dbReference type="PANTHER" id="PTHR11845:SF13">
    <property type="entry name" value="5'-DEOXYNUCLEOTIDASE HDDC2"/>
    <property type="match status" value="1"/>
</dbReference>
<dbReference type="Pfam" id="PF12917">
    <property type="entry name" value="YfbR-like"/>
    <property type="match status" value="1"/>
</dbReference>
<dbReference type="SMART" id="SM00471">
    <property type="entry name" value="HDc"/>
    <property type="match status" value="1"/>
</dbReference>
<dbReference type="SUPFAM" id="SSF109604">
    <property type="entry name" value="HD-domain/PDEase-like"/>
    <property type="match status" value="1"/>
</dbReference>
<dbReference type="PROSITE" id="PS51831">
    <property type="entry name" value="HD"/>
    <property type="match status" value="1"/>
</dbReference>
<sequence>MKQSHFFAHLSRLKLINRWPLMRNVRTENVSEHSLQVAMVAHALAAIKNRKFGGNVNAERIALLAMYHDASEVLTGDLPTPVKYFNAQIAQEYKAIEKIAQQKLVDMVPEELRDIFAPLIDEHAYSDEEKSLVKQADALCAYLKCLEELAAGNNEFLLAKTRLEATLEARRSQEMDYFMEVFVPSFHLSLDEISQDSPL</sequence>
<reference key="1">
    <citation type="journal article" date="2002" name="Nucleic Acids Res.">
        <title>Genome sequence of Shigella flexneri 2a: insights into pathogenicity through comparison with genomes of Escherichia coli K12 and O157.</title>
        <authorList>
            <person name="Jin Q."/>
            <person name="Yuan Z."/>
            <person name="Xu J."/>
            <person name="Wang Y."/>
            <person name="Shen Y."/>
            <person name="Lu W."/>
            <person name="Wang J."/>
            <person name="Liu H."/>
            <person name="Yang J."/>
            <person name="Yang F."/>
            <person name="Zhang X."/>
            <person name="Zhang J."/>
            <person name="Yang G."/>
            <person name="Wu H."/>
            <person name="Qu D."/>
            <person name="Dong J."/>
            <person name="Sun L."/>
            <person name="Xue Y."/>
            <person name="Zhao A."/>
            <person name="Gao Y."/>
            <person name="Zhu J."/>
            <person name="Kan B."/>
            <person name="Ding K."/>
            <person name="Chen S."/>
            <person name="Cheng H."/>
            <person name="Yao Z."/>
            <person name="He B."/>
            <person name="Chen R."/>
            <person name="Ma D."/>
            <person name="Qiang B."/>
            <person name="Wen Y."/>
            <person name="Hou Y."/>
            <person name="Yu J."/>
        </authorList>
    </citation>
    <scope>NUCLEOTIDE SEQUENCE [LARGE SCALE GENOMIC DNA]</scope>
    <source>
        <strain>301 / Serotype 2a</strain>
    </source>
</reference>
<reference key="2">
    <citation type="journal article" date="2003" name="Infect. Immun.">
        <title>Complete genome sequence and comparative genomics of Shigella flexneri serotype 2a strain 2457T.</title>
        <authorList>
            <person name="Wei J."/>
            <person name="Goldberg M.B."/>
            <person name="Burland V."/>
            <person name="Venkatesan M.M."/>
            <person name="Deng W."/>
            <person name="Fournier G."/>
            <person name="Mayhew G.F."/>
            <person name="Plunkett G. III"/>
            <person name="Rose D.J."/>
            <person name="Darling A."/>
            <person name="Mau B."/>
            <person name="Perna N.T."/>
            <person name="Payne S.M."/>
            <person name="Runyen-Janecky L.J."/>
            <person name="Zhou S."/>
            <person name="Schwartz D.C."/>
            <person name="Blattner F.R."/>
        </authorList>
    </citation>
    <scope>NUCLEOTIDE SEQUENCE [LARGE SCALE GENOMIC DNA]</scope>
    <source>
        <strain>ATCC 700930 / 2457T / Serotype 2a</strain>
    </source>
</reference>
<evidence type="ECO:0000255" key="1">
    <source>
        <dbReference type="HAMAP-Rule" id="MF_01100"/>
    </source>
</evidence>
<evidence type="ECO:0000255" key="2">
    <source>
        <dbReference type="PROSITE-ProRule" id="PRU01175"/>
    </source>
</evidence>
<name>5DNU_SHIFL</name>
<proteinExistence type="inferred from homology"/>
<feature type="chain" id="PRO_0000095060" description="5'-deoxynucleotidase YfbR">
    <location>
        <begin position="1"/>
        <end position="199"/>
    </location>
</feature>
<feature type="domain" description="HD" evidence="2">
    <location>
        <begin position="30"/>
        <end position="142"/>
    </location>
</feature>
<feature type="binding site" evidence="1">
    <location>
        <begin position="18"/>
        <end position="19"/>
    </location>
    <ligand>
        <name>substrate</name>
    </ligand>
</feature>
<feature type="binding site" evidence="1">
    <location>
        <position position="33"/>
    </location>
    <ligand>
        <name>a divalent metal cation</name>
        <dbReference type="ChEBI" id="CHEBI:60240"/>
    </ligand>
</feature>
<feature type="binding site" evidence="1">
    <location>
        <position position="33"/>
    </location>
    <ligand>
        <name>substrate</name>
    </ligand>
</feature>
<feature type="binding site" evidence="1">
    <location>
        <position position="68"/>
    </location>
    <ligand>
        <name>a divalent metal cation</name>
        <dbReference type="ChEBI" id="CHEBI:60240"/>
    </ligand>
</feature>
<feature type="binding site" evidence="1">
    <location>
        <position position="69"/>
    </location>
    <ligand>
        <name>a divalent metal cation</name>
        <dbReference type="ChEBI" id="CHEBI:60240"/>
    </ligand>
</feature>
<feature type="binding site" evidence="1">
    <location>
        <position position="69"/>
    </location>
    <ligand>
        <name>substrate</name>
    </ligand>
</feature>
<feature type="binding site" evidence="1">
    <location>
        <begin position="77"/>
        <end position="80"/>
    </location>
    <ligand>
        <name>substrate</name>
    </ligand>
</feature>
<feature type="binding site" evidence="1">
    <location>
        <position position="137"/>
    </location>
    <ligand>
        <name>a divalent metal cation</name>
        <dbReference type="ChEBI" id="CHEBI:60240"/>
    </ligand>
</feature>
<feature type="binding site" evidence="1">
    <location>
        <position position="137"/>
    </location>
    <ligand>
        <name>substrate</name>
    </ligand>
</feature>
<feature type="site" description="Appears to be important in orienting the phosphate for catalysis" evidence="1">
    <location>
        <position position="18"/>
    </location>
</feature>
<gene>
    <name evidence="1" type="primary">yfbR</name>
    <name type="ordered locus">SF2367</name>
    <name type="ordered locus">S2502</name>
</gene>
<organism>
    <name type="scientific">Shigella flexneri</name>
    <dbReference type="NCBI Taxonomy" id="623"/>
    <lineage>
        <taxon>Bacteria</taxon>
        <taxon>Pseudomonadati</taxon>
        <taxon>Pseudomonadota</taxon>
        <taxon>Gammaproteobacteria</taxon>
        <taxon>Enterobacterales</taxon>
        <taxon>Enterobacteriaceae</taxon>
        <taxon>Shigella</taxon>
    </lineage>
</organism>
<comment type="function">
    <text evidence="1">Catalyzes the strictly specific dephosphorylation of 2'-deoxyribonucleoside 5'-monophosphates.</text>
</comment>
<comment type="catalytic activity">
    <reaction evidence="1">
        <text>a 2'-deoxyribonucleoside 5'-phosphate + H2O = a 2'-deoxyribonucleoside + phosphate</text>
        <dbReference type="Rhea" id="RHEA:36167"/>
        <dbReference type="ChEBI" id="CHEBI:15377"/>
        <dbReference type="ChEBI" id="CHEBI:18274"/>
        <dbReference type="ChEBI" id="CHEBI:43474"/>
        <dbReference type="ChEBI" id="CHEBI:65317"/>
        <dbReference type="EC" id="3.1.3.89"/>
    </reaction>
</comment>
<comment type="cofactor">
    <cofactor evidence="1">
        <name>a divalent metal cation</name>
        <dbReference type="ChEBI" id="CHEBI:60240"/>
    </cofactor>
</comment>
<comment type="subunit">
    <text evidence="1">Homodimer.</text>
</comment>
<comment type="subcellular location">
    <subcellularLocation>
        <location evidence="1">Cytoplasm</location>
    </subcellularLocation>
</comment>
<comment type="similarity">
    <text evidence="1">Belongs to the 5DNU family.</text>
</comment>
<accession>Q83QS4</accession>
<keyword id="KW-0963">Cytoplasm</keyword>
<keyword id="KW-0378">Hydrolase</keyword>
<keyword id="KW-0479">Metal-binding</keyword>
<keyword id="KW-0547">Nucleotide-binding</keyword>
<keyword id="KW-1185">Reference proteome</keyword>